<comment type="function">
    <text>Involved in O antigen modification. Involved in the translocation of bactoprenol-linked glucose across the cytoplasmic membrane.</text>
</comment>
<comment type="subcellular location">
    <subcellularLocation>
        <location evidence="2">Host membrane</location>
        <topology evidence="2">Multi-pass membrane protein</topology>
    </subcellularLocation>
</comment>
<comment type="similarity">
    <text evidence="2">Belongs to the GtrA family.</text>
</comment>
<protein>
    <recommendedName>
        <fullName>Bactoprenol-linked glucose translocase</fullName>
    </recommendedName>
    <alternativeName>
        <fullName>Flippase</fullName>
    </alternativeName>
</protein>
<reference key="1">
    <citation type="journal article" date="1997" name="Gene">
        <title>Shigella flexneri type-specific antigen V: cloning, sequencing and characterization of the glucosyl transferase gene of temperate bacteriophage SfV.</title>
        <authorList>
            <person name="Huan P.T."/>
            <person name="Whittle B.L."/>
            <person name="Bastin D.A."/>
            <person name="Lindberg A.A."/>
            <person name="Verma N.K."/>
        </authorList>
    </citation>
    <scope>NUCLEOTIDE SEQUENCE [GENOMIC DNA]</scope>
</reference>
<reference key="2">
    <citation type="journal article" date="2002" name="J. Bacteriol.">
        <title>Complete genomic sequence of SfV, a serotype-converting temperate bacteriophage of Shigella flexneri.</title>
        <authorList>
            <person name="Allison G.E."/>
            <person name="Angeles D."/>
            <person name="Tran-Dinh N."/>
            <person name="Verma N.K."/>
        </authorList>
    </citation>
    <scope>NUCLEOTIDE SEQUENCE [LARGE SCALE GENOMIC DNA]</scope>
</reference>
<name>GTRA_BPSF5</name>
<organism>
    <name type="scientific">Shigella phage SfV</name>
    <name type="common">Shigella flexneri bacteriophage V</name>
    <name type="synonym">Bacteriophage SfV</name>
    <dbReference type="NCBI Taxonomy" id="55884"/>
    <lineage>
        <taxon>Viruses</taxon>
        <taxon>Duplodnaviria</taxon>
        <taxon>Heunggongvirae</taxon>
        <taxon>Uroviricota</taxon>
        <taxon>Caudoviricetes</taxon>
    </lineage>
</organism>
<feature type="chain" id="PRO_0000212249" description="Bactoprenol-linked glucose translocase">
    <location>
        <begin position="1"/>
        <end position="120"/>
    </location>
</feature>
<feature type="transmembrane region" description="Helical" evidence="1">
    <location>
        <begin position="10"/>
        <end position="30"/>
    </location>
</feature>
<feature type="transmembrane region" description="Helical" evidence="1">
    <location>
        <begin position="34"/>
        <end position="54"/>
    </location>
</feature>
<feature type="transmembrane region" description="Helical" evidence="1">
    <location>
        <begin position="65"/>
        <end position="85"/>
    </location>
</feature>
<feature type="transmembrane region" description="Helical" evidence="1">
    <location>
        <begin position="90"/>
        <end position="110"/>
    </location>
</feature>
<accession>O22008</accession>
<evidence type="ECO:0000255" key="1"/>
<evidence type="ECO:0000305" key="2"/>
<keyword id="KW-1043">Host membrane</keyword>
<keyword id="KW-0472">Membrane</keyword>
<keyword id="KW-1185">Reference proteome</keyword>
<keyword id="KW-0812">Transmembrane</keyword>
<keyword id="KW-1133">Transmembrane helix</keyword>
<keyword id="KW-0813">Transport</keyword>
<organismHost>
    <name type="scientific">Shigella flexneri</name>
    <dbReference type="NCBI Taxonomy" id="623"/>
</organismHost>
<dbReference type="EMBL" id="U82619">
    <property type="protein sequence ID" value="AAB72134.1"/>
    <property type="molecule type" value="Genomic_DNA"/>
</dbReference>
<dbReference type="RefSeq" id="NP_599057.1">
    <property type="nucleotide sequence ID" value="NC_003444.1"/>
</dbReference>
<dbReference type="SMR" id="O22008"/>
<dbReference type="TCDB" id="2.A.129.1.1">
    <property type="family name" value="the lipid-linked sugar translocase (lst) family"/>
</dbReference>
<dbReference type="GeneID" id="935242"/>
<dbReference type="KEGG" id="vg:935242"/>
<dbReference type="OrthoDB" id="17195at10239"/>
<dbReference type="Proteomes" id="UP000009068">
    <property type="component" value="Genome"/>
</dbReference>
<dbReference type="GO" id="GO:0033644">
    <property type="term" value="C:host cell membrane"/>
    <property type="evidence" value="ECO:0007669"/>
    <property type="project" value="UniProtKB-SubCell"/>
</dbReference>
<dbReference type="GO" id="GO:0005886">
    <property type="term" value="C:plasma membrane"/>
    <property type="evidence" value="ECO:0007669"/>
    <property type="project" value="TreeGrafter"/>
</dbReference>
<dbReference type="GO" id="GO:0000271">
    <property type="term" value="P:polysaccharide biosynthetic process"/>
    <property type="evidence" value="ECO:0007669"/>
    <property type="project" value="InterPro"/>
</dbReference>
<dbReference type="InterPro" id="IPR016480">
    <property type="entry name" value="Glc_translocase_bactprenl-link"/>
</dbReference>
<dbReference type="InterPro" id="IPR051401">
    <property type="entry name" value="GtrA_CellWall_Glycosyl"/>
</dbReference>
<dbReference type="InterPro" id="IPR007267">
    <property type="entry name" value="GtrA_DPMS_TM"/>
</dbReference>
<dbReference type="PANTHER" id="PTHR38459">
    <property type="entry name" value="PROPHAGE BACTOPRENOL-LINKED GLUCOSE TRANSLOCASE HOMOLOG"/>
    <property type="match status" value="1"/>
</dbReference>
<dbReference type="PANTHER" id="PTHR38459:SF1">
    <property type="entry name" value="PROPHAGE BACTOPRENOL-LINKED GLUCOSE TRANSLOCASE HOMOLOG"/>
    <property type="match status" value="1"/>
</dbReference>
<dbReference type="Pfam" id="PF04138">
    <property type="entry name" value="GtrA_DPMS_TM"/>
    <property type="match status" value="1"/>
</dbReference>
<dbReference type="PIRSF" id="PIRSF006298">
    <property type="entry name" value="GtrA_prd"/>
    <property type="match status" value="1"/>
</dbReference>
<gene>
    <name type="primary">gtrA</name>
    <name type="synonym">26</name>
</gene>
<proteinExistence type="inferred from homology"/>
<sequence>MLKLFVKYTSIGVLNTLIHWVVFGVCIYAAHTSQALANFTGFVVAVSFSFFANARFTFKASTTAMRYMLYVGFMGILSVIVGWAADKCSLPPIVTLITFSAISLVCGFVYSKFIVFRDAK</sequence>